<keyword id="KW-0024">Alternative initiation</keyword>
<keyword id="KW-1048">Host nucleus</keyword>
<keyword id="KW-0597">Phosphoprotein</keyword>
<proteinExistence type="evidence at protein level"/>
<feature type="chain" id="PRO_0000385486" description="Nuclear phosphoprotein UL3">
    <location>
        <begin position="1"/>
        <end position="235"/>
    </location>
</feature>
<feature type="region of interest" description="Disordered" evidence="2">
    <location>
        <begin position="38"/>
        <end position="89"/>
    </location>
</feature>
<feature type="region of interest" description="Disordered" evidence="2">
    <location>
        <begin position="138"/>
        <end position="157"/>
    </location>
</feature>
<feature type="compositionally biased region" description="Polar residues" evidence="2">
    <location>
        <begin position="38"/>
        <end position="50"/>
    </location>
</feature>
<feature type="splice variant" id="VSP_038182" description="In isoform 2." evidence="3">
    <location>
        <begin position="1"/>
        <end position="11"/>
    </location>
</feature>
<protein>
    <recommendedName>
        <fullName>Nuclear phosphoprotein UL3</fullName>
    </recommendedName>
</protein>
<name>NP03_HHV1F</name>
<accession>Q1XBW5</accession>
<gene>
    <name type="ORF">UL3</name>
</gene>
<dbReference type="EMBL" id="AY730706">
    <property type="protein sequence ID" value="AAW62372.1"/>
    <property type="molecule type" value="Genomic_DNA"/>
</dbReference>
<dbReference type="GO" id="GO:0042025">
    <property type="term" value="C:host cell nucleus"/>
    <property type="evidence" value="ECO:0007669"/>
    <property type="project" value="UniProtKB-SubCell"/>
</dbReference>
<dbReference type="InterPro" id="IPR005035">
    <property type="entry name" value="Herpes_UL3"/>
</dbReference>
<dbReference type="Pfam" id="PF03369">
    <property type="entry name" value="Herpes_UL3"/>
    <property type="match status" value="1"/>
</dbReference>
<evidence type="ECO:0000250" key="1"/>
<evidence type="ECO:0000256" key="2">
    <source>
        <dbReference type="SAM" id="MobiDB-lite"/>
    </source>
</evidence>
<evidence type="ECO:0000305" key="3"/>
<organismHost>
    <name type="scientific">Homo sapiens</name>
    <name type="common">Human</name>
    <dbReference type="NCBI Taxonomy" id="9606"/>
</organismHost>
<organism>
    <name type="scientific">Human herpesvirus 1 (strain F)</name>
    <name type="common">HHV-1</name>
    <name type="synonym">Human herpes simplex virus 1</name>
    <dbReference type="NCBI Taxonomy" id="10304"/>
    <lineage>
        <taxon>Viruses</taxon>
        <taxon>Duplodnaviria</taxon>
        <taxon>Heunggongvirae</taxon>
        <taxon>Peploviricota</taxon>
        <taxon>Herviviricetes</taxon>
        <taxon>Herpesvirales</taxon>
        <taxon>Orthoherpesviridae</taxon>
        <taxon>Alphaherpesvirinae</taxon>
        <taxon>Simplexvirus</taxon>
        <taxon>Simplexvirus humanalpha1</taxon>
        <taxon>Human herpesvirus 1</taxon>
    </lineage>
</organism>
<sequence length="235" mass="25639">MVKPLVSYGSVMSGVGGEGVPSALAILASWGWTFDTPNHESGISPDTTPADSIRGAAVASPDQPLHGGPEREATAPSFSPTRADDGPPCTDGPYVTFDTLFMVSSIDELGRRQLTDTIRKDLRLSLAKFSIACTKTSSFSGNAPRHHRRGAFQRGTRAPRSNKSLQMFVLCKRTHAARVREQLRVVIQSRKPRKYYTRSSDGRLCPAVPVFVHEFVSSEPMRLHRDNVMLASGAE</sequence>
<reference key="1">
    <citation type="journal article" date="2006" name="Mol. Ther.">
        <title>Oncolytic viruses derived from the gamma34.5-deleted herpes simplex virus recombinant R3616 encode a truncated UL3 protein.</title>
        <authorList>
            <person name="Dambach M.J."/>
            <person name="Trecki J."/>
            <person name="Martin N."/>
            <person name="Markovitz N.S."/>
        </authorList>
    </citation>
    <scope>NUCLEOTIDE SEQUENCE [GENOMIC DNA] (ISOFORM 1)</scope>
</reference>
<reference key="2">
    <citation type="journal article" date="1999" name="J. Virol.">
        <title>The U(L)3 protein of herpes simplex virus 1 is translated predominantly from the second in-frame methionine codon and is subject to at least two posttranslational modifications.</title>
        <authorList>
            <person name="Markovitz N.S."/>
            <person name="Filatov F."/>
            <person name="Roizman B."/>
        </authorList>
    </citation>
    <scope>PHOSPHORYLATION</scope>
    <scope>ALTERNATIVE INITIATION</scope>
</reference>
<comment type="subcellular location">
    <subcellularLocation>
        <location evidence="1">Host nucleus</location>
    </subcellularLocation>
</comment>
<comment type="alternative products">
    <event type="alternative initiation"/>
    <isoform>
        <id>Q1XBW5-1</id>
        <name>1</name>
        <sequence type="displayed"/>
    </isoform>
    <isoform>
        <id>Q1XBW5-2</id>
        <name>2</name>
        <sequence type="described" ref="VSP_038182"/>
    </isoform>
</comment>
<comment type="PTM">
    <text evidence="1">Phosphorylated.</text>
</comment>
<comment type="miscellaneous">
    <molecule>Isoform 1</molecule>
    <text>Minor isoform.</text>
</comment>
<comment type="miscellaneous">
    <molecule>Isoform 2</molecule>
    <text evidence="3">Major isoform.</text>
</comment>
<comment type="similarity">
    <text evidence="3">Belongs to the alphaherpesvirinae HHV-1 UL3 family.</text>
</comment>